<dbReference type="EC" id="6.1.1.4" evidence="1"/>
<dbReference type="EMBL" id="AE017126">
    <property type="protein sequence ID" value="AAP99991.1"/>
    <property type="molecule type" value="Genomic_DNA"/>
</dbReference>
<dbReference type="RefSeq" id="NP_875339.1">
    <property type="nucleotide sequence ID" value="NC_005042.1"/>
</dbReference>
<dbReference type="RefSeq" id="WP_011125099.1">
    <property type="nucleotide sequence ID" value="NC_005042.1"/>
</dbReference>
<dbReference type="SMR" id="Q7VBZ5"/>
<dbReference type="STRING" id="167539.Pro_0947"/>
<dbReference type="EnsemblBacteria" id="AAP99991">
    <property type="protein sequence ID" value="AAP99991"/>
    <property type="gene ID" value="Pro_0947"/>
</dbReference>
<dbReference type="KEGG" id="pma:Pro_0947"/>
<dbReference type="PATRIC" id="fig|167539.5.peg.996"/>
<dbReference type="eggNOG" id="COG0495">
    <property type="taxonomic scope" value="Bacteria"/>
</dbReference>
<dbReference type="HOGENOM" id="CLU_004427_0_0_3"/>
<dbReference type="OrthoDB" id="9810365at2"/>
<dbReference type="Proteomes" id="UP000001420">
    <property type="component" value="Chromosome"/>
</dbReference>
<dbReference type="GO" id="GO:0005829">
    <property type="term" value="C:cytosol"/>
    <property type="evidence" value="ECO:0007669"/>
    <property type="project" value="TreeGrafter"/>
</dbReference>
<dbReference type="GO" id="GO:0002161">
    <property type="term" value="F:aminoacyl-tRNA deacylase activity"/>
    <property type="evidence" value="ECO:0007669"/>
    <property type="project" value="InterPro"/>
</dbReference>
<dbReference type="GO" id="GO:0005524">
    <property type="term" value="F:ATP binding"/>
    <property type="evidence" value="ECO:0007669"/>
    <property type="project" value="UniProtKB-UniRule"/>
</dbReference>
<dbReference type="GO" id="GO:0004823">
    <property type="term" value="F:leucine-tRNA ligase activity"/>
    <property type="evidence" value="ECO:0007669"/>
    <property type="project" value="UniProtKB-UniRule"/>
</dbReference>
<dbReference type="GO" id="GO:0006429">
    <property type="term" value="P:leucyl-tRNA aminoacylation"/>
    <property type="evidence" value="ECO:0007669"/>
    <property type="project" value="UniProtKB-UniRule"/>
</dbReference>
<dbReference type="CDD" id="cd07958">
    <property type="entry name" value="Anticodon_Ia_Leu_BEm"/>
    <property type="match status" value="1"/>
</dbReference>
<dbReference type="CDD" id="cd00812">
    <property type="entry name" value="LeuRS_core"/>
    <property type="match status" value="1"/>
</dbReference>
<dbReference type="FunFam" id="3.40.50.620:FF:000003">
    <property type="entry name" value="Leucine--tRNA ligase"/>
    <property type="match status" value="1"/>
</dbReference>
<dbReference type="FunFam" id="1.10.730.10:FF:000011">
    <property type="entry name" value="Leucine--tRNA ligase chloroplastic/mitochondrial"/>
    <property type="match status" value="1"/>
</dbReference>
<dbReference type="Gene3D" id="3.40.50.620">
    <property type="entry name" value="HUPs"/>
    <property type="match status" value="2"/>
</dbReference>
<dbReference type="Gene3D" id="1.10.730.10">
    <property type="entry name" value="Isoleucyl-tRNA Synthetase, Domain 1"/>
    <property type="match status" value="2"/>
</dbReference>
<dbReference type="HAMAP" id="MF_00049_B">
    <property type="entry name" value="Leu_tRNA_synth_B"/>
    <property type="match status" value="1"/>
</dbReference>
<dbReference type="InterPro" id="IPR001412">
    <property type="entry name" value="aa-tRNA-synth_I_CS"/>
</dbReference>
<dbReference type="InterPro" id="IPR002300">
    <property type="entry name" value="aa-tRNA-synth_Ia"/>
</dbReference>
<dbReference type="InterPro" id="IPR002302">
    <property type="entry name" value="Leu-tRNA-ligase"/>
</dbReference>
<dbReference type="InterPro" id="IPR025709">
    <property type="entry name" value="Leu_tRNA-synth_edit"/>
</dbReference>
<dbReference type="InterPro" id="IPR013155">
    <property type="entry name" value="M/V/L/I-tRNA-synth_anticd-bd"/>
</dbReference>
<dbReference type="InterPro" id="IPR015413">
    <property type="entry name" value="Methionyl/Leucyl_tRNA_Synth"/>
</dbReference>
<dbReference type="InterPro" id="IPR014729">
    <property type="entry name" value="Rossmann-like_a/b/a_fold"/>
</dbReference>
<dbReference type="InterPro" id="IPR009080">
    <property type="entry name" value="tRNAsynth_Ia_anticodon-bd"/>
</dbReference>
<dbReference type="InterPro" id="IPR009008">
    <property type="entry name" value="Val/Leu/Ile-tRNA-synth_edit"/>
</dbReference>
<dbReference type="NCBIfam" id="TIGR00396">
    <property type="entry name" value="leuS_bact"/>
    <property type="match status" value="1"/>
</dbReference>
<dbReference type="PANTHER" id="PTHR43740:SF2">
    <property type="entry name" value="LEUCINE--TRNA LIGASE, MITOCHONDRIAL"/>
    <property type="match status" value="1"/>
</dbReference>
<dbReference type="PANTHER" id="PTHR43740">
    <property type="entry name" value="LEUCYL-TRNA SYNTHETASE"/>
    <property type="match status" value="1"/>
</dbReference>
<dbReference type="Pfam" id="PF08264">
    <property type="entry name" value="Anticodon_1"/>
    <property type="match status" value="1"/>
</dbReference>
<dbReference type="Pfam" id="PF00133">
    <property type="entry name" value="tRNA-synt_1"/>
    <property type="match status" value="2"/>
</dbReference>
<dbReference type="Pfam" id="PF13603">
    <property type="entry name" value="tRNA-synt_1_2"/>
    <property type="match status" value="1"/>
</dbReference>
<dbReference type="Pfam" id="PF09334">
    <property type="entry name" value="tRNA-synt_1g"/>
    <property type="match status" value="1"/>
</dbReference>
<dbReference type="PRINTS" id="PR00985">
    <property type="entry name" value="TRNASYNTHLEU"/>
</dbReference>
<dbReference type="SUPFAM" id="SSF47323">
    <property type="entry name" value="Anticodon-binding domain of a subclass of class I aminoacyl-tRNA synthetases"/>
    <property type="match status" value="1"/>
</dbReference>
<dbReference type="SUPFAM" id="SSF52374">
    <property type="entry name" value="Nucleotidylyl transferase"/>
    <property type="match status" value="1"/>
</dbReference>
<dbReference type="SUPFAM" id="SSF50677">
    <property type="entry name" value="ValRS/IleRS/LeuRS editing domain"/>
    <property type="match status" value="1"/>
</dbReference>
<dbReference type="PROSITE" id="PS00178">
    <property type="entry name" value="AA_TRNA_LIGASE_I"/>
    <property type="match status" value="1"/>
</dbReference>
<evidence type="ECO:0000255" key="1">
    <source>
        <dbReference type="HAMAP-Rule" id="MF_00049"/>
    </source>
</evidence>
<feature type="chain" id="PRO_0000152063" description="Leucine--tRNA ligase">
    <location>
        <begin position="1"/>
        <end position="870"/>
    </location>
</feature>
<feature type="short sequence motif" description="'HIGH' region">
    <location>
        <begin position="55"/>
        <end position="65"/>
    </location>
</feature>
<feature type="short sequence motif" description="'KMSKS' region">
    <location>
        <begin position="626"/>
        <end position="630"/>
    </location>
</feature>
<feature type="binding site" evidence="1">
    <location>
        <position position="629"/>
    </location>
    <ligand>
        <name>ATP</name>
        <dbReference type="ChEBI" id="CHEBI:30616"/>
    </ligand>
</feature>
<organism>
    <name type="scientific">Prochlorococcus marinus (strain SARG / CCMP1375 / SS120)</name>
    <dbReference type="NCBI Taxonomy" id="167539"/>
    <lineage>
        <taxon>Bacteria</taxon>
        <taxon>Bacillati</taxon>
        <taxon>Cyanobacteriota</taxon>
        <taxon>Cyanophyceae</taxon>
        <taxon>Synechococcales</taxon>
        <taxon>Prochlorococcaceae</taxon>
        <taxon>Prochlorococcus</taxon>
    </lineage>
</organism>
<protein>
    <recommendedName>
        <fullName evidence="1">Leucine--tRNA ligase</fullName>
        <ecNumber evidence="1">6.1.1.4</ecNumber>
    </recommendedName>
    <alternativeName>
        <fullName evidence="1">Leucyl-tRNA synthetase</fullName>
        <shortName evidence="1">LeuRS</shortName>
    </alternativeName>
</protein>
<keyword id="KW-0030">Aminoacyl-tRNA synthetase</keyword>
<keyword id="KW-0067">ATP-binding</keyword>
<keyword id="KW-0963">Cytoplasm</keyword>
<keyword id="KW-0436">Ligase</keyword>
<keyword id="KW-0547">Nucleotide-binding</keyword>
<keyword id="KW-0648">Protein biosynthesis</keyword>
<keyword id="KW-1185">Reference proteome</keyword>
<comment type="catalytic activity">
    <reaction evidence="1">
        <text>tRNA(Leu) + L-leucine + ATP = L-leucyl-tRNA(Leu) + AMP + diphosphate</text>
        <dbReference type="Rhea" id="RHEA:11688"/>
        <dbReference type="Rhea" id="RHEA-COMP:9613"/>
        <dbReference type="Rhea" id="RHEA-COMP:9622"/>
        <dbReference type="ChEBI" id="CHEBI:30616"/>
        <dbReference type="ChEBI" id="CHEBI:33019"/>
        <dbReference type="ChEBI" id="CHEBI:57427"/>
        <dbReference type="ChEBI" id="CHEBI:78442"/>
        <dbReference type="ChEBI" id="CHEBI:78494"/>
        <dbReference type="ChEBI" id="CHEBI:456215"/>
        <dbReference type="EC" id="6.1.1.4"/>
    </reaction>
</comment>
<comment type="subcellular location">
    <subcellularLocation>
        <location evidence="1">Cytoplasm</location>
    </subcellularLocation>
</comment>
<comment type="similarity">
    <text evidence="1">Belongs to the class-I aminoacyl-tRNA synthetase family.</text>
</comment>
<sequence>MASKISQTPEKQPSTAYDPLSIETRWQQSWKEQGLYKTKEPTKSQKTFYALSMFPYPSGTLHMGHVRNYVITDVIARLHRMKGDSVLHPMGWDAFGLPAENAAIERGIPADIWTYKNIEDMRNQLNRLGLSIDWDKEVTTCKEEYYKWTQYIFLELYEAGLAYQKSATVNWDPIDKTVLANEQVDANGRSWRSGALVEKKKLKQWFLKITDFADELLEDIELLSGWPQNVKTMQQNWIGRSNGTEIDFYIKGKNNIFITVFTTRPDTLHGTEYLVLAPDHELINSIIDKNKITELEQFRTEISILTDQERTSDGNNKRGMFLGCHAINPINKKIIPIWVGEYVLSSYATGAVMGVPAHDKRDYKFAKKYSLPIQYVIKSPSQEASDLEASSAYVKEGIMINSGEFNGINSKEAGFMITKLGVKQGWAKNKVTYKLRDWLISRQRMWGCPIPIIYCPDCGSVPVKREELPVKLTNPSVIGKSQENKNNIPIMKCSKCNKDSILETDTMDTFMCSSWYFLRYIDVENNKLPFTKTEVDKWLPVDQYVGGIEHAILHLLYSRFLIKALRNRGLLNIKEPFSNLLTQGMVQGVTFKNPKTSKYISPDHINDINTPLDPETGEPLDVLYEKMSKSKYNGVDPASVIDKYGTDTARMFILFKAPPEKDLEWDESDVEGQYRFLNRLWRIVIYSIETKDINISNCTQEILLNDLSDKERKLIKVLNNTIKEVTNDLVNDFQFNTAISELMILCNSIYENIDDCGDYIVTETFKKLTLLLAPFAPHIAEEFWIKLKGKGSVHENSWPTYDPKALLEDSYKLIIQINGKVRGNISVNHEDSELELKNKALACETTQKWLNGIEPKRIIIVKGKIINIVF</sequence>
<gene>
    <name evidence="1" type="primary">leuS</name>
    <name type="ordered locus">Pro_0947</name>
</gene>
<name>SYL_PROMA</name>
<accession>Q7VBZ5</accession>
<reference key="1">
    <citation type="journal article" date="2003" name="Proc. Natl. Acad. Sci. U.S.A.">
        <title>Genome sequence of the cyanobacterium Prochlorococcus marinus SS120, a nearly minimal oxyphototrophic genome.</title>
        <authorList>
            <person name="Dufresne A."/>
            <person name="Salanoubat M."/>
            <person name="Partensky F."/>
            <person name="Artiguenave F."/>
            <person name="Axmann I.M."/>
            <person name="Barbe V."/>
            <person name="Duprat S."/>
            <person name="Galperin M.Y."/>
            <person name="Koonin E.V."/>
            <person name="Le Gall F."/>
            <person name="Makarova K.S."/>
            <person name="Ostrowski M."/>
            <person name="Oztas S."/>
            <person name="Robert C."/>
            <person name="Rogozin I.B."/>
            <person name="Scanlan D.J."/>
            <person name="Tandeau de Marsac N."/>
            <person name="Weissenbach J."/>
            <person name="Wincker P."/>
            <person name="Wolf Y.I."/>
            <person name="Hess W.R."/>
        </authorList>
    </citation>
    <scope>NUCLEOTIDE SEQUENCE [LARGE SCALE GENOMIC DNA]</scope>
    <source>
        <strain>SARG / CCMP1375 / SS120</strain>
    </source>
</reference>
<proteinExistence type="inferred from homology"/>